<name>PDRP_CLOBH</name>
<proteinExistence type="inferred from homology"/>
<protein>
    <recommendedName>
        <fullName evidence="1">Putative pyruvate, phosphate dikinase regulatory protein</fullName>
        <shortName evidence="1">PPDK regulatory protein</shortName>
        <ecNumber evidence="1">2.7.11.32</ecNumber>
        <ecNumber evidence="1">2.7.4.27</ecNumber>
    </recommendedName>
</protein>
<accession>A5I7Y4</accession>
<accession>A7G967</accession>
<organism>
    <name type="scientific">Clostridium botulinum (strain Hall / ATCC 3502 / NCTC 13319 / Type A)</name>
    <dbReference type="NCBI Taxonomy" id="441771"/>
    <lineage>
        <taxon>Bacteria</taxon>
        <taxon>Bacillati</taxon>
        <taxon>Bacillota</taxon>
        <taxon>Clostridia</taxon>
        <taxon>Eubacteriales</taxon>
        <taxon>Clostridiaceae</taxon>
        <taxon>Clostridium</taxon>
    </lineage>
</organism>
<gene>
    <name type="ordered locus">CBO3611</name>
    <name type="ordered locus">CLC_3610</name>
</gene>
<dbReference type="EC" id="2.7.11.32" evidence="1"/>
<dbReference type="EC" id="2.7.4.27" evidence="1"/>
<dbReference type="EMBL" id="CP000727">
    <property type="protein sequence ID" value="ABS37022.1"/>
    <property type="molecule type" value="Genomic_DNA"/>
</dbReference>
<dbReference type="EMBL" id="AM412317">
    <property type="protein sequence ID" value="CAL85169.1"/>
    <property type="molecule type" value="Genomic_DNA"/>
</dbReference>
<dbReference type="RefSeq" id="WP_003359375.1">
    <property type="nucleotide sequence ID" value="NC_009698.1"/>
</dbReference>
<dbReference type="RefSeq" id="YP_001256089.1">
    <property type="nucleotide sequence ID" value="NC_009495.1"/>
</dbReference>
<dbReference type="RefSeq" id="YP_001389332.1">
    <property type="nucleotide sequence ID" value="NC_009698.1"/>
</dbReference>
<dbReference type="SMR" id="A5I7Y4"/>
<dbReference type="GeneID" id="5187756"/>
<dbReference type="KEGG" id="cbh:CLC_3610"/>
<dbReference type="KEGG" id="cbo:CBO3611"/>
<dbReference type="PATRIC" id="fig|413999.7.peg.3587"/>
<dbReference type="HOGENOM" id="CLU_046206_2_1_9"/>
<dbReference type="PRO" id="PR:A5I7Y4"/>
<dbReference type="Proteomes" id="UP000001986">
    <property type="component" value="Chromosome"/>
</dbReference>
<dbReference type="GO" id="GO:0043531">
    <property type="term" value="F:ADP binding"/>
    <property type="evidence" value="ECO:0007669"/>
    <property type="project" value="UniProtKB-UniRule"/>
</dbReference>
<dbReference type="GO" id="GO:0005524">
    <property type="term" value="F:ATP binding"/>
    <property type="evidence" value="ECO:0007669"/>
    <property type="project" value="InterPro"/>
</dbReference>
<dbReference type="GO" id="GO:0016776">
    <property type="term" value="F:phosphotransferase activity, phosphate group as acceptor"/>
    <property type="evidence" value="ECO:0007669"/>
    <property type="project" value="UniProtKB-UniRule"/>
</dbReference>
<dbReference type="GO" id="GO:0004674">
    <property type="term" value="F:protein serine/threonine kinase activity"/>
    <property type="evidence" value="ECO:0007669"/>
    <property type="project" value="UniProtKB-UniRule"/>
</dbReference>
<dbReference type="HAMAP" id="MF_00921">
    <property type="entry name" value="PDRP"/>
    <property type="match status" value="1"/>
</dbReference>
<dbReference type="InterPro" id="IPR005177">
    <property type="entry name" value="Kinase-pyrophosphorylase"/>
</dbReference>
<dbReference type="InterPro" id="IPR026565">
    <property type="entry name" value="PPDK_reg"/>
</dbReference>
<dbReference type="NCBIfam" id="NF003742">
    <property type="entry name" value="PRK05339.1"/>
    <property type="match status" value="1"/>
</dbReference>
<dbReference type="PANTHER" id="PTHR31756">
    <property type="entry name" value="PYRUVATE, PHOSPHATE DIKINASE REGULATORY PROTEIN 1, CHLOROPLASTIC"/>
    <property type="match status" value="1"/>
</dbReference>
<dbReference type="PANTHER" id="PTHR31756:SF3">
    <property type="entry name" value="PYRUVATE, PHOSPHATE DIKINASE REGULATORY PROTEIN 1, CHLOROPLASTIC"/>
    <property type="match status" value="1"/>
</dbReference>
<dbReference type="Pfam" id="PF03618">
    <property type="entry name" value="Kinase-PPPase"/>
    <property type="match status" value="1"/>
</dbReference>
<feature type="chain" id="PRO_0000316661" description="Putative pyruvate, phosphate dikinase regulatory protein">
    <location>
        <begin position="1"/>
        <end position="269"/>
    </location>
</feature>
<feature type="binding site" evidence="1">
    <location>
        <begin position="147"/>
        <end position="154"/>
    </location>
    <ligand>
        <name>ADP</name>
        <dbReference type="ChEBI" id="CHEBI:456216"/>
    </ligand>
</feature>
<reference key="1">
    <citation type="journal article" date="2007" name="Genome Res.">
        <title>Genome sequence of a proteolytic (Group I) Clostridium botulinum strain Hall A and comparative analysis of the clostridial genomes.</title>
        <authorList>
            <person name="Sebaihia M."/>
            <person name="Peck M.W."/>
            <person name="Minton N.P."/>
            <person name="Thomson N.R."/>
            <person name="Holden M.T.G."/>
            <person name="Mitchell W.J."/>
            <person name="Carter A.T."/>
            <person name="Bentley S.D."/>
            <person name="Mason D.R."/>
            <person name="Crossman L."/>
            <person name="Paul C.J."/>
            <person name="Ivens A."/>
            <person name="Wells-Bennik M.H.J."/>
            <person name="Davis I.J."/>
            <person name="Cerdeno-Tarraga A.M."/>
            <person name="Churcher C."/>
            <person name="Quail M.A."/>
            <person name="Chillingworth T."/>
            <person name="Feltwell T."/>
            <person name="Fraser A."/>
            <person name="Goodhead I."/>
            <person name="Hance Z."/>
            <person name="Jagels K."/>
            <person name="Larke N."/>
            <person name="Maddison M."/>
            <person name="Moule S."/>
            <person name="Mungall K."/>
            <person name="Norbertczak H."/>
            <person name="Rabbinowitsch E."/>
            <person name="Sanders M."/>
            <person name="Simmonds M."/>
            <person name="White B."/>
            <person name="Whithead S."/>
            <person name="Parkhill J."/>
        </authorList>
    </citation>
    <scope>NUCLEOTIDE SEQUENCE [LARGE SCALE GENOMIC DNA]</scope>
    <source>
        <strain>Hall / ATCC 3502 / NCTC 13319 / Type A</strain>
    </source>
</reference>
<reference key="2">
    <citation type="journal article" date="2007" name="PLoS ONE">
        <title>Analysis of the neurotoxin complex genes in Clostridium botulinum A1-A4 and B1 strains: BoNT/A3, /Ba4 and /B1 clusters are located within plasmids.</title>
        <authorList>
            <person name="Smith T.J."/>
            <person name="Hill K.K."/>
            <person name="Foley B.T."/>
            <person name="Detter J.C."/>
            <person name="Munk A.C."/>
            <person name="Bruce D.C."/>
            <person name="Doggett N.A."/>
            <person name="Smith L.A."/>
            <person name="Marks J.D."/>
            <person name="Xie G."/>
            <person name="Brettin T.S."/>
        </authorList>
    </citation>
    <scope>NUCLEOTIDE SEQUENCE [LARGE SCALE GENOMIC DNA]</scope>
    <source>
        <strain>Hall / ATCC 3502 / NCTC 13319 / Type A</strain>
    </source>
</reference>
<keyword id="KW-0418">Kinase</keyword>
<keyword id="KW-0547">Nucleotide-binding</keyword>
<keyword id="KW-1185">Reference proteome</keyword>
<keyword id="KW-0723">Serine/threonine-protein kinase</keyword>
<keyword id="KW-0808">Transferase</keyword>
<sequence>MFKIYAVSDSIGETAEQVANATAYQFGSSVKVERVPYVKTFEDVNNLISIIKNPNEAMIISTIVLVDIREFLVQRCVESGIHISNVLGPCISLVSTILNKTPEYKPGAVWDMDKKYYKKIEAMEFAIRYDDSKDHSGIKHADIVLIGLSRTSKTPLSIYLANKGIKALNIPLMPEVPVPEELFEIDRKKIIGLTIDPMHLIEIRRHRVDNMMKIPTELKYANAERVLDELEFADKIMRKLKCKVIDVTKRAIEDTALIIMESVFSDRII</sequence>
<evidence type="ECO:0000255" key="1">
    <source>
        <dbReference type="HAMAP-Rule" id="MF_00921"/>
    </source>
</evidence>
<comment type="function">
    <text evidence="1">Bifunctional serine/threonine kinase and phosphorylase involved in the regulation of the pyruvate, phosphate dikinase (PPDK) by catalyzing its phosphorylation/dephosphorylation.</text>
</comment>
<comment type="catalytic activity">
    <reaction evidence="1">
        <text>N(tele)-phospho-L-histidyl/L-threonyl-[pyruvate, phosphate dikinase] + ADP = N(tele)-phospho-L-histidyl/O-phospho-L-threonyl-[pyruvate, phosphate dikinase] + AMP + H(+)</text>
        <dbReference type="Rhea" id="RHEA:43692"/>
        <dbReference type="Rhea" id="RHEA-COMP:10650"/>
        <dbReference type="Rhea" id="RHEA-COMP:10651"/>
        <dbReference type="ChEBI" id="CHEBI:15378"/>
        <dbReference type="ChEBI" id="CHEBI:30013"/>
        <dbReference type="ChEBI" id="CHEBI:61977"/>
        <dbReference type="ChEBI" id="CHEBI:83586"/>
        <dbReference type="ChEBI" id="CHEBI:456215"/>
        <dbReference type="ChEBI" id="CHEBI:456216"/>
        <dbReference type="EC" id="2.7.11.32"/>
    </reaction>
</comment>
<comment type="catalytic activity">
    <reaction evidence="1">
        <text>N(tele)-phospho-L-histidyl/O-phospho-L-threonyl-[pyruvate, phosphate dikinase] + phosphate + H(+) = N(tele)-phospho-L-histidyl/L-threonyl-[pyruvate, phosphate dikinase] + diphosphate</text>
        <dbReference type="Rhea" id="RHEA:43696"/>
        <dbReference type="Rhea" id="RHEA-COMP:10650"/>
        <dbReference type="Rhea" id="RHEA-COMP:10651"/>
        <dbReference type="ChEBI" id="CHEBI:15378"/>
        <dbReference type="ChEBI" id="CHEBI:30013"/>
        <dbReference type="ChEBI" id="CHEBI:33019"/>
        <dbReference type="ChEBI" id="CHEBI:43474"/>
        <dbReference type="ChEBI" id="CHEBI:61977"/>
        <dbReference type="ChEBI" id="CHEBI:83586"/>
        <dbReference type="EC" id="2.7.4.27"/>
    </reaction>
</comment>
<comment type="similarity">
    <text evidence="1">Belongs to the pyruvate, phosphate/water dikinase regulatory protein family. PDRP subfamily.</text>
</comment>